<accession>Q83IX5</accession>
<gene>
    <name evidence="1" type="primary">wecG</name>
    <name evidence="1" type="synonym">rffM</name>
    <name type="ordered locus">SF3869</name>
    <name type="ordered locus">S3891</name>
</gene>
<feature type="chain" id="PRO_0000208435" description="UDP-N-acetyl-D-mannosaminuronic acid transferase">
    <location>
        <begin position="1"/>
        <end position="246"/>
    </location>
</feature>
<dbReference type="EC" id="2.4.1.180" evidence="1"/>
<dbReference type="EMBL" id="AE005674">
    <property type="protein sequence ID" value="AAN45306.1"/>
    <property type="molecule type" value="Genomic_DNA"/>
</dbReference>
<dbReference type="EMBL" id="AE014073">
    <property type="protein sequence ID" value="AAP18892.1"/>
    <property type="molecule type" value="Genomic_DNA"/>
</dbReference>
<dbReference type="RefSeq" id="NP_709599.1">
    <property type="nucleotide sequence ID" value="NC_004337.2"/>
</dbReference>
<dbReference type="RefSeq" id="WP_001064032.1">
    <property type="nucleotide sequence ID" value="NZ_WPGW01000028.1"/>
</dbReference>
<dbReference type="SMR" id="Q83IX5"/>
<dbReference type="STRING" id="198214.SF3869"/>
<dbReference type="PaxDb" id="198214-SF3869"/>
<dbReference type="GeneID" id="1024174"/>
<dbReference type="KEGG" id="sfl:SF3869"/>
<dbReference type="KEGG" id="sfx:S3891"/>
<dbReference type="PATRIC" id="fig|198214.7.peg.4559"/>
<dbReference type="HOGENOM" id="CLU_063203_3_2_6"/>
<dbReference type="UniPathway" id="UPA00566"/>
<dbReference type="Proteomes" id="UP000001006">
    <property type="component" value="Chromosome"/>
</dbReference>
<dbReference type="Proteomes" id="UP000002673">
    <property type="component" value="Chromosome"/>
</dbReference>
<dbReference type="GO" id="GO:0047241">
    <property type="term" value="F:lipopolysaccharide N-acetylmannosaminouronosyltransferase activity"/>
    <property type="evidence" value="ECO:0007669"/>
    <property type="project" value="UniProtKB-UniRule"/>
</dbReference>
<dbReference type="GO" id="GO:0009246">
    <property type="term" value="P:enterobacterial common antigen biosynthetic process"/>
    <property type="evidence" value="ECO:0007669"/>
    <property type="project" value="UniProtKB-UniRule"/>
</dbReference>
<dbReference type="CDD" id="cd06533">
    <property type="entry name" value="Glyco_transf_WecG_TagA"/>
    <property type="match status" value="1"/>
</dbReference>
<dbReference type="HAMAP" id="MF_01001">
    <property type="entry name" value="WecG_RffM"/>
    <property type="match status" value="1"/>
</dbReference>
<dbReference type="InterPro" id="IPR023085">
    <property type="entry name" value="UDP-ManNAcA_Trfase_WecG"/>
</dbReference>
<dbReference type="InterPro" id="IPR004629">
    <property type="entry name" value="WecG_TagA_CpsF"/>
</dbReference>
<dbReference type="NCBIfam" id="NF002980">
    <property type="entry name" value="PRK03692.1"/>
    <property type="match status" value="1"/>
</dbReference>
<dbReference type="NCBIfam" id="TIGR00696">
    <property type="entry name" value="wecG_tagA_cpsF"/>
    <property type="match status" value="1"/>
</dbReference>
<dbReference type="PANTHER" id="PTHR34136">
    <property type="match status" value="1"/>
</dbReference>
<dbReference type="PANTHER" id="PTHR34136:SF1">
    <property type="entry name" value="UDP-N-ACETYL-D-MANNOSAMINURONIC ACID TRANSFERASE"/>
    <property type="match status" value="1"/>
</dbReference>
<dbReference type="Pfam" id="PF03808">
    <property type="entry name" value="Glyco_tran_WecG"/>
    <property type="match status" value="1"/>
</dbReference>
<sequence length="246" mass="27976">MNNNTTAPTYTLRGLQLIGWRDMQHALDYLFADGQLKQGTLVAINAEKMLTIEDNAEVRELINAAEFKYADGISIVRSVRKKYPQAQVSRVAGADLWEELMARAGKEGTPVFLVGGKPEVLAQTEAKLRNQWNVNIVGSQDGYFKPEQRQALFERIHASGAQIVTVAMGSPKQEIFMRDCRLVHPDALYMGVGGTYDVFTGHVKRAPKIWQTLGLEWLYRLLSQPSRIKRQLRLLRYLRWHYTGNL</sequence>
<organism>
    <name type="scientific">Shigella flexneri</name>
    <dbReference type="NCBI Taxonomy" id="623"/>
    <lineage>
        <taxon>Bacteria</taxon>
        <taxon>Pseudomonadati</taxon>
        <taxon>Pseudomonadota</taxon>
        <taxon>Gammaproteobacteria</taxon>
        <taxon>Enterobacterales</taxon>
        <taxon>Enterobacteriaceae</taxon>
        <taxon>Shigella</taxon>
    </lineage>
</organism>
<evidence type="ECO:0000255" key="1">
    <source>
        <dbReference type="HAMAP-Rule" id="MF_01001"/>
    </source>
</evidence>
<reference key="1">
    <citation type="journal article" date="2002" name="Nucleic Acids Res.">
        <title>Genome sequence of Shigella flexneri 2a: insights into pathogenicity through comparison with genomes of Escherichia coli K12 and O157.</title>
        <authorList>
            <person name="Jin Q."/>
            <person name="Yuan Z."/>
            <person name="Xu J."/>
            <person name="Wang Y."/>
            <person name="Shen Y."/>
            <person name="Lu W."/>
            <person name="Wang J."/>
            <person name="Liu H."/>
            <person name="Yang J."/>
            <person name="Yang F."/>
            <person name="Zhang X."/>
            <person name="Zhang J."/>
            <person name="Yang G."/>
            <person name="Wu H."/>
            <person name="Qu D."/>
            <person name="Dong J."/>
            <person name="Sun L."/>
            <person name="Xue Y."/>
            <person name="Zhao A."/>
            <person name="Gao Y."/>
            <person name="Zhu J."/>
            <person name="Kan B."/>
            <person name="Ding K."/>
            <person name="Chen S."/>
            <person name="Cheng H."/>
            <person name="Yao Z."/>
            <person name="He B."/>
            <person name="Chen R."/>
            <person name="Ma D."/>
            <person name="Qiang B."/>
            <person name="Wen Y."/>
            <person name="Hou Y."/>
            <person name="Yu J."/>
        </authorList>
    </citation>
    <scope>NUCLEOTIDE SEQUENCE [LARGE SCALE GENOMIC DNA]</scope>
    <source>
        <strain>301 / Serotype 2a</strain>
    </source>
</reference>
<reference key="2">
    <citation type="journal article" date="2003" name="Infect. Immun.">
        <title>Complete genome sequence and comparative genomics of Shigella flexneri serotype 2a strain 2457T.</title>
        <authorList>
            <person name="Wei J."/>
            <person name="Goldberg M.B."/>
            <person name="Burland V."/>
            <person name="Venkatesan M.M."/>
            <person name="Deng W."/>
            <person name="Fournier G."/>
            <person name="Mayhew G.F."/>
            <person name="Plunkett G. III"/>
            <person name="Rose D.J."/>
            <person name="Darling A."/>
            <person name="Mau B."/>
            <person name="Perna N.T."/>
            <person name="Payne S.M."/>
            <person name="Runyen-Janecky L.J."/>
            <person name="Zhou S."/>
            <person name="Schwartz D.C."/>
            <person name="Blattner F.R."/>
        </authorList>
    </citation>
    <scope>NUCLEOTIDE SEQUENCE [LARGE SCALE GENOMIC DNA]</scope>
    <source>
        <strain>ATCC 700930 / 2457T / Serotype 2a</strain>
    </source>
</reference>
<keyword id="KW-0328">Glycosyltransferase</keyword>
<keyword id="KW-1185">Reference proteome</keyword>
<keyword id="KW-0808">Transferase</keyword>
<name>WECG_SHIFL</name>
<comment type="function">
    <text evidence="1">Catalyzes the synthesis of Und-PP-GlcNAc-ManNAcA (Lipid II), the second lipid-linked intermediate involved in enterobacterial common antigen (ECA) synthesis.</text>
</comment>
<comment type="catalytic activity">
    <reaction evidence="1">
        <text>UDP-N-acetyl-alpha-D-mannosaminouronate + N-acetyl-alpha-D-glucosaminyl-di-trans,octa-cis-undecaprenyl diphosphate = beta-D-ManNAcA-(1-&gt;4)-alpha-D-GlcNAc-di-trans,octa-cis-undecaprenyl diphosphate + UDP + H(+)</text>
        <dbReference type="Rhea" id="RHEA:28366"/>
        <dbReference type="ChEBI" id="CHEBI:15378"/>
        <dbReference type="ChEBI" id="CHEBI:58223"/>
        <dbReference type="ChEBI" id="CHEBI:61495"/>
        <dbReference type="ChEBI" id="CHEBI:62959"/>
        <dbReference type="ChEBI" id="CHEBI:70731"/>
        <dbReference type="EC" id="2.4.1.180"/>
    </reaction>
</comment>
<comment type="pathway">
    <text evidence="1">Bacterial outer membrane biogenesis; enterobacterial common antigen biosynthesis.</text>
</comment>
<comment type="similarity">
    <text evidence="1">Belongs to the glycosyltransferase 26 family.</text>
</comment>
<proteinExistence type="inferred from homology"/>
<protein>
    <recommendedName>
        <fullName evidence="1">UDP-N-acetyl-D-mannosaminuronic acid transferase</fullName>
        <shortName evidence="1">UDP-ManNAcA transferase</shortName>
        <ecNumber evidence="1">2.4.1.180</ecNumber>
    </recommendedName>
</protein>